<reference key="1">
    <citation type="journal article" date="2010" name="Genome Biol.">
        <title>Structure and dynamics of the pan-genome of Streptococcus pneumoniae and closely related species.</title>
        <authorList>
            <person name="Donati C."/>
            <person name="Hiller N.L."/>
            <person name="Tettelin H."/>
            <person name="Muzzi A."/>
            <person name="Croucher N.J."/>
            <person name="Angiuoli S.V."/>
            <person name="Oggioni M."/>
            <person name="Dunning Hotopp J.C."/>
            <person name="Hu F.Z."/>
            <person name="Riley D.R."/>
            <person name="Covacci A."/>
            <person name="Mitchell T.J."/>
            <person name="Bentley S.D."/>
            <person name="Kilian M."/>
            <person name="Ehrlich G.D."/>
            <person name="Rappuoli R."/>
            <person name="Moxon E.R."/>
            <person name="Masignani V."/>
        </authorList>
    </citation>
    <scope>NUCLEOTIDE SEQUENCE [LARGE SCALE GENOMIC DNA]</scope>
    <source>
        <strain>JJA</strain>
    </source>
</reference>
<evidence type="ECO:0000255" key="1">
    <source>
        <dbReference type="HAMAP-Rule" id="MF_01569"/>
    </source>
</evidence>
<accession>C1CC55</accession>
<name>SYP_STRZJ</name>
<dbReference type="EC" id="6.1.1.15" evidence="1"/>
<dbReference type="EMBL" id="CP000919">
    <property type="protein sequence ID" value="ACO19373.1"/>
    <property type="molecule type" value="Genomic_DNA"/>
</dbReference>
<dbReference type="RefSeq" id="WP_000814080.1">
    <property type="nucleotide sequence ID" value="NC_012466.1"/>
</dbReference>
<dbReference type="SMR" id="C1CC55"/>
<dbReference type="KEGG" id="sjj:SPJ_0274"/>
<dbReference type="HOGENOM" id="CLU_016739_0_0_9"/>
<dbReference type="Proteomes" id="UP000002206">
    <property type="component" value="Chromosome"/>
</dbReference>
<dbReference type="GO" id="GO:0005829">
    <property type="term" value="C:cytosol"/>
    <property type="evidence" value="ECO:0007669"/>
    <property type="project" value="TreeGrafter"/>
</dbReference>
<dbReference type="GO" id="GO:0002161">
    <property type="term" value="F:aminoacyl-tRNA deacylase activity"/>
    <property type="evidence" value="ECO:0007669"/>
    <property type="project" value="InterPro"/>
</dbReference>
<dbReference type="GO" id="GO:0005524">
    <property type="term" value="F:ATP binding"/>
    <property type="evidence" value="ECO:0007669"/>
    <property type="project" value="UniProtKB-UniRule"/>
</dbReference>
<dbReference type="GO" id="GO:0140096">
    <property type="term" value="F:catalytic activity, acting on a protein"/>
    <property type="evidence" value="ECO:0007669"/>
    <property type="project" value="UniProtKB-ARBA"/>
</dbReference>
<dbReference type="GO" id="GO:0004827">
    <property type="term" value="F:proline-tRNA ligase activity"/>
    <property type="evidence" value="ECO:0007669"/>
    <property type="project" value="UniProtKB-UniRule"/>
</dbReference>
<dbReference type="GO" id="GO:0016740">
    <property type="term" value="F:transferase activity"/>
    <property type="evidence" value="ECO:0007669"/>
    <property type="project" value="UniProtKB-ARBA"/>
</dbReference>
<dbReference type="GO" id="GO:0006433">
    <property type="term" value="P:prolyl-tRNA aminoacylation"/>
    <property type="evidence" value="ECO:0007669"/>
    <property type="project" value="UniProtKB-UniRule"/>
</dbReference>
<dbReference type="CDD" id="cd04334">
    <property type="entry name" value="ProRS-INS"/>
    <property type="match status" value="1"/>
</dbReference>
<dbReference type="CDD" id="cd00861">
    <property type="entry name" value="ProRS_anticodon_short"/>
    <property type="match status" value="1"/>
</dbReference>
<dbReference type="CDD" id="cd00779">
    <property type="entry name" value="ProRS_core_prok"/>
    <property type="match status" value="1"/>
</dbReference>
<dbReference type="FunFam" id="3.30.930.10:FF:000062">
    <property type="entry name" value="Proline--tRNA ligase"/>
    <property type="match status" value="1"/>
</dbReference>
<dbReference type="FunFam" id="3.30.930.10:FF:000070">
    <property type="entry name" value="Proline--tRNA ligase"/>
    <property type="match status" value="1"/>
</dbReference>
<dbReference type="FunFam" id="3.40.50.800:FF:000011">
    <property type="entry name" value="Proline--tRNA ligase"/>
    <property type="match status" value="1"/>
</dbReference>
<dbReference type="FunFam" id="3.90.960.10:FF:000004">
    <property type="entry name" value="Proline--tRNA ligase"/>
    <property type="match status" value="1"/>
</dbReference>
<dbReference type="Gene3D" id="3.40.50.800">
    <property type="entry name" value="Anticodon-binding domain"/>
    <property type="match status" value="1"/>
</dbReference>
<dbReference type="Gene3D" id="3.30.930.10">
    <property type="entry name" value="Bira Bifunctional Protein, Domain 2"/>
    <property type="match status" value="2"/>
</dbReference>
<dbReference type="Gene3D" id="3.90.960.10">
    <property type="entry name" value="YbaK/aminoacyl-tRNA synthetase-associated domain"/>
    <property type="match status" value="1"/>
</dbReference>
<dbReference type="HAMAP" id="MF_01569">
    <property type="entry name" value="Pro_tRNA_synth_type1"/>
    <property type="match status" value="1"/>
</dbReference>
<dbReference type="InterPro" id="IPR002314">
    <property type="entry name" value="aa-tRNA-synt_IIb"/>
</dbReference>
<dbReference type="InterPro" id="IPR006195">
    <property type="entry name" value="aa-tRNA-synth_II"/>
</dbReference>
<dbReference type="InterPro" id="IPR045864">
    <property type="entry name" value="aa-tRNA-synth_II/BPL/LPL"/>
</dbReference>
<dbReference type="InterPro" id="IPR004154">
    <property type="entry name" value="Anticodon-bd"/>
</dbReference>
<dbReference type="InterPro" id="IPR036621">
    <property type="entry name" value="Anticodon-bd_dom_sf"/>
</dbReference>
<dbReference type="InterPro" id="IPR002316">
    <property type="entry name" value="Pro-tRNA-ligase_IIa"/>
</dbReference>
<dbReference type="InterPro" id="IPR004500">
    <property type="entry name" value="Pro-tRNA-synth_IIa_bac-type"/>
</dbReference>
<dbReference type="InterPro" id="IPR023717">
    <property type="entry name" value="Pro-tRNA-Synthase_IIa_type1"/>
</dbReference>
<dbReference type="InterPro" id="IPR050062">
    <property type="entry name" value="Pro-tRNA_synthetase"/>
</dbReference>
<dbReference type="InterPro" id="IPR044140">
    <property type="entry name" value="ProRS_anticodon_short"/>
</dbReference>
<dbReference type="InterPro" id="IPR033730">
    <property type="entry name" value="ProRS_core_prok"/>
</dbReference>
<dbReference type="InterPro" id="IPR036754">
    <property type="entry name" value="YbaK/aa-tRNA-synt-asso_dom_sf"/>
</dbReference>
<dbReference type="InterPro" id="IPR007214">
    <property type="entry name" value="YbaK/aa-tRNA-synth-assoc-dom"/>
</dbReference>
<dbReference type="NCBIfam" id="NF006625">
    <property type="entry name" value="PRK09194.1"/>
    <property type="match status" value="1"/>
</dbReference>
<dbReference type="NCBIfam" id="TIGR00409">
    <property type="entry name" value="proS_fam_II"/>
    <property type="match status" value="2"/>
</dbReference>
<dbReference type="PANTHER" id="PTHR42753">
    <property type="entry name" value="MITOCHONDRIAL RIBOSOME PROTEIN L39/PROLYL-TRNA LIGASE FAMILY MEMBER"/>
    <property type="match status" value="1"/>
</dbReference>
<dbReference type="PANTHER" id="PTHR42753:SF2">
    <property type="entry name" value="PROLINE--TRNA LIGASE"/>
    <property type="match status" value="1"/>
</dbReference>
<dbReference type="Pfam" id="PF03129">
    <property type="entry name" value="HGTP_anticodon"/>
    <property type="match status" value="1"/>
</dbReference>
<dbReference type="Pfam" id="PF00587">
    <property type="entry name" value="tRNA-synt_2b"/>
    <property type="match status" value="1"/>
</dbReference>
<dbReference type="Pfam" id="PF04073">
    <property type="entry name" value="tRNA_edit"/>
    <property type="match status" value="1"/>
</dbReference>
<dbReference type="PRINTS" id="PR01046">
    <property type="entry name" value="TRNASYNTHPRO"/>
</dbReference>
<dbReference type="SUPFAM" id="SSF52954">
    <property type="entry name" value="Class II aaRS ABD-related"/>
    <property type="match status" value="1"/>
</dbReference>
<dbReference type="SUPFAM" id="SSF55681">
    <property type="entry name" value="Class II aaRS and biotin synthetases"/>
    <property type="match status" value="1"/>
</dbReference>
<dbReference type="SUPFAM" id="SSF55826">
    <property type="entry name" value="YbaK/ProRS associated domain"/>
    <property type="match status" value="1"/>
</dbReference>
<dbReference type="PROSITE" id="PS50862">
    <property type="entry name" value="AA_TRNA_LIGASE_II"/>
    <property type="match status" value="1"/>
</dbReference>
<gene>
    <name evidence="1" type="primary">proS</name>
    <name type="ordered locus">SPJ_0274</name>
</gene>
<comment type="function">
    <text evidence="1">Catalyzes the attachment of proline to tRNA(Pro) in a two-step reaction: proline is first activated by ATP to form Pro-AMP and then transferred to the acceptor end of tRNA(Pro). As ProRS can inadvertently accommodate and process non-cognate amino acids such as alanine and cysteine, to avoid such errors it has two additional distinct editing activities against alanine. One activity is designated as 'pretransfer' editing and involves the tRNA(Pro)-independent hydrolysis of activated Ala-AMP. The other activity is designated 'posttransfer' editing and involves deacylation of mischarged Ala-tRNA(Pro). The misacylated Cys-tRNA(Pro) is not edited by ProRS.</text>
</comment>
<comment type="catalytic activity">
    <reaction evidence="1">
        <text>tRNA(Pro) + L-proline + ATP = L-prolyl-tRNA(Pro) + AMP + diphosphate</text>
        <dbReference type="Rhea" id="RHEA:14305"/>
        <dbReference type="Rhea" id="RHEA-COMP:9700"/>
        <dbReference type="Rhea" id="RHEA-COMP:9702"/>
        <dbReference type="ChEBI" id="CHEBI:30616"/>
        <dbReference type="ChEBI" id="CHEBI:33019"/>
        <dbReference type="ChEBI" id="CHEBI:60039"/>
        <dbReference type="ChEBI" id="CHEBI:78442"/>
        <dbReference type="ChEBI" id="CHEBI:78532"/>
        <dbReference type="ChEBI" id="CHEBI:456215"/>
        <dbReference type="EC" id="6.1.1.15"/>
    </reaction>
</comment>
<comment type="subunit">
    <text evidence="1">Homodimer.</text>
</comment>
<comment type="subcellular location">
    <subcellularLocation>
        <location evidence="1">Cytoplasm</location>
    </subcellularLocation>
</comment>
<comment type="domain">
    <text evidence="1">Consists of three domains: the N-terminal catalytic domain, the editing domain and the C-terminal anticodon-binding domain.</text>
</comment>
<comment type="similarity">
    <text evidence="1">Belongs to the class-II aminoacyl-tRNA synthetase family. ProS type 1 subfamily.</text>
</comment>
<protein>
    <recommendedName>
        <fullName evidence="1">Proline--tRNA ligase</fullName>
        <ecNumber evidence="1">6.1.1.15</ecNumber>
    </recommendedName>
    <alternativeName>
        <fullName evidence="1">Prolyl-tRNA synthetase</fullName>
        <shortName evidence="1">ProRS</shortName>
    </alternativeName>
</protein>
<feature type="chain" id="PRO_1000185516" description="Proline--tRNA ligase">
    <location>
        <begin position="1"/>
        <end position="617"/>
    </location>
</feature>
<sequence length="617" mass="68625">MKQSKMPIPTLREMPSDAQVISHALMLRAGYVRQVSAGVYSYLPLANRVIEKAKNIMRQEFEKIGAVEMLAPTLLSAELWRESGRYETYGEDLYKLKNREKSDFILGPTHEETFTAIVRDSVKSYKQLPLNLYQIQPKYRDEKRPRNGLLRTREFIMKDAYSFHANYDSLDSVYDEYKAAYERIFTRSGLDFKAIIGDGGAMGGKDSQEFMAITSARTDLDRWVVLDKSVASFDEIPAEVQEEIKAELLKWIVSGEDTIAYSSESSYAANLEMATNEYKPSNRVVAEEEVTRVATPDVKSIDEVAAFLNVPEEQTIKTLFYIADGELVAALLVGNDQLNEVKLKNHLGADFFDVASEEEVANVVQAGFGSLGPVGLPENIKIIADRKVQDVRNAVVGANEDGYHLTGVNPGRDFTAEYVDIREVREGEISPDGQGVLNFARGIEIGHIFKLGTRYSASMGADVLDENGRAVPIIMGCYGIGVSRLLSAVMEQHARLFVNKTPKGEYRYAWGINFPKELAPFDVHLITVNVKDEEAQALTEKLEASLMGAGYEVLTDDRNERVGVKFSDSDLIGLPIRITVGKKAADGIVEVKIKATGDTIEVHADNVLETLEILSKK</sequence>
<keyword id="KW-0030">Aminoacyl-tRNA synthetase</keyword>
<keyword id="KW-0067">ATP-binding</keyword>
<keyword id="KW-0963">Cytoplasm</keyword>
<keyword id="KW-0436">Ligase</keyword>
<keyword id="KW-0547">Nucleotide-binding</keyword>
<keyword id="KW-0648">Protein biosynthesis</keyword>
<organism>
    <name type="scientific">Streptococcus pneumoniae (strain JJA)</name>
    <dbReference type="NCBI Taxonomy" id="488222"/>
    <lineage>
        <taxon>Bacteria</taxon>
        <taxon>Bacillati</taxon>
        <taxon>Bacillota</taxon>
        <taxon>Bacilli</taxon>
        <taxon>Lactobacillales</taxon>
        <taxon>Streptococcaceae</taxon>
        <taxon>Streptococcus</taxon>
    </lineage>
</organism>
<proteinExistence type="inferred from homology"/>